<organism>
    <name type="scientific">Escherichia fergusonii (strain ATCC 35469 / DSM 13698 / CCUG 18766 / IAM 14443 / JCM 21226 / LMG 7866 / NBRC 102419 / NCTC 12128 / CDC 0568-73)</name>
    <dbReference type="NCBI Taxonomy" id="585054"/>
    <lineage>
        <taxon>Bacteria</taxon>
        <taxon>Pseudomonadati</taxon>
        <taxon>Pseudomonadota</taxon>
        <taxon>Gammaproteobacteria</taxon>
        <taxon>Enterobacterales</taxon>
        <taxon>Enterobacteriaceae</taxon>
        <taxon>Escherichia</taxon>
    </lineage>
</organism>
<keyword id="KW-0489">Methyltransferase</keyword>
<keyword id="KW-0949">S-adenosyl-L-methionine</keyword>
<keyword id="KW-0808">Transferase</keyword>
<keyword id="KW-0819">tRNA processing</keyword>
<protein>
    <recommendedName>
        <fullName evidence="1">tRNA/tmRNA (uracil-C(5))-methyltransferase</fullName>
        <ecNumber evidence="1">2.1.1.-</ecNumber>
        <ecNumber evidence="1">2.1.1.35</ecNumber>
    </recommendedName>
    <alternativeName>
        <fullName evidence="1">tRNA (uracil(54)-C(5))-methyltransferase</fullName>
    </alternativeName>
    <alternativeName>
        <fullName evidence="1">tRNA(m5U54)-methyltransferase</fullName>
        <shortName evidence="1">RUMT</shortName>
    </alternativeName>
    <alternativeName>
        <fullName evidence="1">tmRNA (uracil(341)-C(5))-methyltransferase</fullName>
    </alternativeName>
</protein>
<proteinExistence type="inferred from homology"/>
<comment type="function">
    <text evidence="1">Dual-specificity methyltransferase that catalyzes the formation of 5-methyluridine at position 54 (m5U54) in all tRNAs, and that of position 341 (m5U341) in tmRNA (transfer-mRNA).</text>
</comment>
<comment type="catalytic activity">
    <reaction evidence="1">
        <text>uridine(54) in tRNA + S-adenosyl-L-methionine = 5-methyluridine(54) in tRNA + S-adenosyl-L-homocysteine + H(+)</text>
        <dbReference type="Rhea" id="RHEA:42712"/>
        <dbReference type="Rhea" id="RHEA-COMP:10167"/>
        <dbReference type="Rhea" id="RHEA-COMP:10193"/>
        <dbReference type="ChEBI" id="CHEBI:15378"/>
        <dbReference type="ChEBI" id="CHEBI:57856"/>
        <dbReference type="ChEBI" id="CHEBI:59789"/>
        <dbReference type="ChEBI" id="CHEBI:65315"/>
        <dbReference type="ChEBI" id="CHEBI:74447"/>
        <dbReference type="EC" id="2.1.1.35"/>
    </reaction>
</comment>
<comment type="catalytic activity">
    <reaction evidence="1">
        <text>uridine(341) in tmRNA + S-adenosyl-L-methionine = 5-methyluridine(341) in tmRNA + S-adenosyl-L-homocysteine + H(+)</text>
        <dbReference type="Rhea" id="RHEA:43612"/>
        <dbReference type="Rhea" id="RHEA-COMP:10630"/>
        <dbReference type="Rhea" id="RHEA-COMP:10631"/>
        <dbReference type="ChEBI" id="CHEBI:15378"/>
        <dbReference type="ChEBI" id="CHEBI:57856"/>
        <dbReference type="ChEBI" id="CHEBI:59789"/>
        <dbReference type="ChEBI" id="CHEBI:65315"/>
        <dbReference type="ChEBI" id="CHEBI:74447"/>
    </reaction>
</comment>
<comment type="similarity">
    <text evidence="1">Belongs to the class I-like SAM-binding methyltransferase superfamily. RNA M5U methyltransferase family. TrmA subfamily.</text>
</comment>
<name>TRMA_ESCF3</name>
<reference key="1">
    <citation type="journal article" date="2009" name="PLoS Genet.">
        <title>Organised genome dynamics in the Escherichia coli species results in highly diverse adaptive paths.</title>
        <authorList>
            <person name="Touchon M."/>
            <person name="Hoede C."/>
            <person name="Tenaillon O."/>
            <person name="Barbe V."/>
            <person name="Baeriswyl S."/>
            <person name="Bidet P."/>
            <person name="Bingen E."/>
            <person name="Bonacorsi S."/>
            <person name="Bouchier C."/>
            <person name="Bouvet O."/>
            <person name="Calteau A."/>
            <person name="Chiapello H."/>
            <person name="Clermont O."/>
            <person name="Cruveiller S."/>
            <person name="Danchin A."/>
            <person name="Diard M."/>
            <person name="Dossat C."/>
            <person name="Karoui M.E."/>
            <person name="Frapy E."/>
            <person name="Garry L."/>
            <person name="Ghigo J.M."/>
            <person name="Gilles A.M."/>
            <person name="Johnson J."/>
            <person name="Le Bouguenec C."/>
            <person name="Lescat M."/>
            <person name="Mangenot S."/>
            <person name="Martinez-Jehanne V."/>
            <person name="Matic I."/>
            <person name="Nassif X."/>
            <person name="Oztas S."/>
            <person name="Petit M.A."/>
            <person name="Pichon C."/>
            <person name="Rouy Z."/>
            <person name="Ruf C.S."/>
            <person name="Schneider D."/>
            <person name="Tourret J."/>
            <person name="Vacherie B."/>
            <person name="Vallenet D."/>
            <person name="Medigue C."/>
            <person name="Rocha E.P.C."/>
            <person name="Denamur E."/>
        </authorList>
    </citation>
    <scope>NUCLEOTIDE SEQUENCE [LARGE SCALE GENOMIC DNA]</scope>
    <source>
        <strain>ATCC 35469 / DSM 13698 / BCRC 15582 / CCUG 18766 / IAM 14443 / JCM 21226 / LMG 7866 / NBRC 102419 / NCTC 12128 / CDC 0568-73</strain>
    </source>
</reference>
<accession>B7LUM8</accession>
<evidence type="ECO:0000255" key="1">
    <source>
        <dbReference type="HAMAP-Rule" id="MF_01011"/>
    </source>
</evidence>
<dbReference type="EC" id="2.1.1.-" evidence="1"/>
<dbReference type="EC" id="2.1.1.35" evidence="1"/>
<dbReference type="EMBL" id="CU928158">
    <property type="protein sequence ID" value="CAQ91231.1"/>
    <property type="molecule type" value="Genomic_DNA"/>
</dbReference>
<dbReference type="RefSeq" id="WP_000187029.1">
    <property type="nucleotide sequence ID" value="NC_011740.1"/>
</dbReference>
<dbReference type="SMR" id="B7LUM8"/>
<dbReference type="GeneID" id="75059392"/>
<dbReference type="KEGG" id="efe:EFER_3795"/>
<dbReference type="HOGENOM" id="CLU_043022_0_0_6"/>
<dbReference type="OrthoDB" id="9804590at2"/>
<dbReference type="Proteomes" id="UP000000745">
    <property type="component" value="Chromosome"/>
</dbReference>
<dbReference type="GO" id="GO:0005829">
    <property type="term" value="C:cytosol"/>
    <property type="evidence" value="ECO:0007669"/>
    <property type="project" value="TreeGrafter"/>
</dbReference>
<dbReference type="GO" id="GO:0019843">
    <property type="term" value="F:rRNA binding"/>
    <property type="evidence" value="ECO:0007669"/>
    <property type="project" value="TreeGrafter"/>
</dbReference>
<dbReference type="GO" id="GO:0030697">
    <property type="term" value="F:tRNA (uracil(54)-C5)-methyltransferase activity, S-adenosyl methionine-dependent"/>
    <property type="evidence" value="ECO:0007669"/>
    <property type="project" value="UniProtKB-UniRule"/>
</dbReference>
<dbReference type="GO" id="GO:0000049">
    <property type="term" value="F:tRNA binding"/>
    <property type="evidence" value="ECO:0007669"/>
    <property type="project" value="TreeGrafter"/>
</dbReference>
<dbReference type="GO" id="GO:0030488">
    <property type="term" value="P:tRNA methylation"/>
    <property type="evidence" value="ECO:0007669"/>
    <property type="project" value="UniProtKB-UniRule"/>
</dbReference>
<dbReference type="CDD" id="cd02440">
    <property type="entry name" value="AdoMet_MTases"/>
    <property type="match status" value="1"/>
</dbReference>
<dbReference type="FunFam" id="2.40.50.1070:FF:000001">
    <property type="entry name" value="tRNA/tmRNA (uracil-C(5))-methyltransferase"/>
    <property type="match status" value="1"/>
</dbReference>
<dbReference type="FunFam" id="3.40.50.150:FF:000012">
    <property type="entry name" value="tRNA/tmRNA (uracil-C(5))-methyltransferase"/>
    <property type="match status" value="1"/>
</dbReference>
<dbReference type="Gene3D" id="2.40.50.1070">
    <property type="match status" value="1"/>
</dbReference>
<dbReference type="Gene3D" id="3.40.50.150">
    <property type="entry name" value="Vaccinia Virus protein VP39"/>
    <property type="match status" value="1"/>
</dbReference>
<dbReference type="HAMAP" id="MF_01011">
    <property type="entry name" value="RNA_methyltr_TrmA"/>
    <property type="match status" value="1"/>
</dbReference>
<dbReference type="InterPro" id="IPR030390">
    <property type="entry name" value="MeTrfase_TrmA_AS"/>
</dbReference>
<dbReference type="InterPro" id="IPR030391">
    <property type="entry name" value="MeTrfase_TrmA_CS"/>
</dbReference>
<dbReference type="InterPro" id="IPR029063">
    <property type="entry name" value="SAM-dependent_MTases_sf"/>
</dbReference>
<dbReference type="InterPro" id="IPR011869">
    <property type="entry name" value="TrmA_MeTrfase"/>
</dbReference>
<dbReference type="InterPro" id="IPR010280">
    <property type="entry name" value="U5_MeTrfase_fam"/>
</dbReference>
<dbReference type="NCBIfam" id="TIGR02143">
    <property type="entry name" value="trmA_only"/>
    <property type="match status" value="1"/>
</dbReference>
<dbReference type="PANTHER" id="PTHR47790">
    <property type="entry name" value="TRNA/TMRNA (URACIL-C(5))-METHYLTRANSFERASE"/>
    <property type="match status" value="1"/>
</dbReference>
<dbReference type="PANTHER" id="PTHR47790:SF2">
    <property type="entry name" value="TRNA_TMRNA (URACIL-C(5))-METHYLTRANSFERASE"/>
    <property type="match status" value="1"/>
</dbReference>
<dbReference type="Pfam" id="PF05958">
    <property type="entry name" value="tRNA_U5-meth_tr"/>
    <property type="match status" value="1"/>
</dbReference>
<dbReference type="SUPFAM" id="SSF53335">
    <property type="entry name" value="S-adenosyl-L-methionine-dependent methyltransferases"/>
    <property type="match status" value="1"/>
</dbReference>
<dbReference type="PROSITE" id="PS51687">
    <property type="entry name" value="SAM_MT_RNA_M5U"/>
    <property type="match status" value="1"/>
</dbReference>
<dbReference type="PROSITE" id="PS01230">
    <property type="entry name" value="TRMA_1"/>
    <property type="match status" value="1"/>
</dbReference>
<dbReference type="PROSITE" id="PS01231">
    <property type="entry name" value="TRMA_2"/>
    <property type="match status" value="1"/>
</dbReference>
<sequence>MTPEHLPTEQYEAQLAEKVVRLQSMMAPFSDLVPEVFRSPVSHYRMRAEFRIWHDGDDLYHIIFDQQTKSRIRVDSFPAASELINQLMTAMIAGVRNNPVLRHKLFQIDYLTTLSNQAVVSLLYHKKLDDEWRQQAEVLRDALRAQNLNVHLIGRATKTKIELDQDYIDERLPVAGREMIYRQVENSFTQPNAAMNIQMLEWALDVTKDSKGDLLELYCGNGNFSLALARNFDRVLATEIAKPSVAAAQYNIAANHIDNVQIIRMAAEEFTQAMNGVREFNRLQGIDLKSYQCETIFVDPPRSGLDSETEKMVQAYPRILYISCNPETLCKNLETLSQTHKVERLALFDQFPYTHHMECGVLLTAK</sequence>
<gene>
    <name evidence="1" type="primary">trmA</name>
    <name type="ordered locus">EFER_3795</name>
</gene>
<feature type="chain" id="PRO_1000198546" description="tRNA/tmRNA (uracil-C(5))-methyltransferase">
    <location>
        <begin position="1"/>
        <end position="366"/>
    </location>
</feature>
<feature type="active site" description="Nucleophile" evidence="1">
    <location>
        <position position="324"/>
    </location>
</feature>
<feature type="active site" description="Proton acceptor" evidence="1">
    <location>
        <position position="358"/>
    </location>
</feature>
<feature type="binding site" evidence="1">
    <location>
        <position position="190"/>
    </location>
    <ligand>
        <name>S-adenosyl-L-methionine</name>
        <dbReference type="ChEBI" id="CHEBI:59789"/>
    </ligand>
</feature>
<feature type="binding site" evidence="1">
    <location>
        <position position="218"/>
    </location>
    <ligand>
        <name>S-adenosyl-L-methionine</name>
        <dbReference type="ChEBI" id="CHEBI:59789"/>
    </ligand>
</feature>
<feature type="binding site" evidence="1">
    <location>
        <position position="223"/>
    </location>
    <ligand>
        <name>S-adenosyl-L-methionine</name>
        <dbReference type="ChEBI" id="CHEBI:59789"/>
    </ligand>
</feature>
<feature type="binding site" evidence="1">
    <location>
        <position position="239"/>
    </location>
    <ligand>
        <name>S-adenosyl-L-methionine</name>
        <dbReference type="ChEBI" id="CHEBI:59789"/>
    </ligand>
</feature>
<feature type="binding site" evidence="1">
    <location>
        <position position="299"/>
    </location>
    <ligand>
        <name>S-adenosyl-L-methionine</name>
        <dbReference type="ChEBI" id="CHEBI:59789"/>
    </ligand>
</feature>